<dbReference type="EMBL" id="CP000608">
    <property type="protein sequence ID" value="ABO46208.1"/>
    <property type="molecule type" value="Genomic_DNA"/>
</dbReference>
<dbReference type="RefSeq" id="WP_003024823.1">
    <property type="nucleotide sequence ID" value="NC_009257.1"/>
</dbReference>
<dbReference type="SMR" id="A4IWA6"/>
<dbReference type="KEGG" id="ftw:FTW_0241"/>
<dbReference type="HOGENOM" id="CLU_077636_1_0_6"/>
<dbReference type="GO" id="GO:0005737">
    <property type="term" value="C:cytoplasm"/>
    <property type="evidence" value="ECO:0007669"/>
    <property type="project" value="UniProtKB-SubCell"/>
</dbReference>
<dbReference type="GO" id="GO:0005840">
    <property type="term" value="C:ribosome"/>
    <property type="evidence" value="ECO:0007669"/>
    <property type="project" value="InterPro"/>
</dbReference>
<dbReference type="GO" id="GO:0043022">
    <property type="term" value="F:ribosome binding"/>
    <property type="evidence" value="ECO:0007669"/>
    <property type="project" value="InterPro"/>
</dbReference>
<dbReference type="GO" id="GO:0042274">
    <property type="term" value="P:ribosomal small subunit biogenesis"/>
    <property type="evidence" value="ECO:0007669"/>
    <property type="project" value="UniProtKB-UniRule"/>
</dbReference>
<dbReference type="GO" id="GO:0006364">
    <property type="term" value="P:rRNA processing"/>
    <property type="evidence" value="ECO:0007669"/>
    <property type="project" value="UniProtKB-UniRule"/>
</dbReference>
<dbReference type="Gene3D" id="2.30.30.240">
    <property type="entry name" value="PRC-barrel domain"/>
    <property type="match status" value="1"/>
</dbReference>
<dbReference type="Gene3D" id="2.40.30.60">
    <property type="entry name" value="RimM"/>
    <property type="match status" value="1"/>
</dbReference>
<dbReference type="HAMAP" id="MF_00014">
    <property type="entry name" value="Ribosome_mat_RimM"/>
    <property type="match status" value="1"/>
</dbReference>
<dbReference type="InterPro" id="IPR011033">
    <property type="entry name" value="PRC_barrel-like_sf"/>
</dbReference>
<dbReference type="InterPro" id="IPR056792">
    <property type="entry name" value="PRC_RimM"/>
</dbReference>
<dbReference type="InterPro" id="IPR011961">
    <property type="entry name" value="RimM"/>
</dbReference>
<dbReference type="InterPro" id="IPR002676">
    <property type="entry name" value="RimM_N"/>
</dbReference>
<dbReference type="InterPro" id="IPR036976">
    <property type="entry name" value="RimM_N_sf"/>
</dbReference>
<dbReference type="InterPro" id="IPR009000">
    <property type="entry name" value="Transl_B-barrel_sf"/>
</dbReference>
<dbReference type="NCBIfam" id="TIGR02273">
    <property type="entry name" value="16S_RimM"/>
    <property type="match status" value="1"/>
</dbReference>
<dbReference type="NCBIfam" id="NF011185">
    <property type="entry name" value="PRK14591.1"/>
    <property type="match status" value="1"/>
</dbReference>
<dbReference type="PANTHER" id="PTHR33692">
    <property type="entry name" value="RIBOSOME MATURATION FACTOR RIMM"/>
    <property type="match status" value="1"/>
</dbReference>
<dbReference type="PANTHER" id="PTHR33692:SF1">
    <property type="entry name" value="RIBOSOME MATURATION FACTOR RIMM"/>
    <property type="match status" value="1"/>
</dbReference>
<dbReference type="Pfam" id="PF24986">
    <property type="entry name" value="PRC_RimM"/>
    <property type="match status" value="1"/>
</dbReference>
<dbReference type="Pfam" id="PF01782">
    <property type="entry name" value="RimM"/>
    <property type="match status" value="1"/>
</dbReference>
<dbReference type="SUPFAM" id="SSF50346">
    <property type="entry name" value="PRC-barrel domain"/>
    <property type="match status" value="1"/>
</dbReference>
<dbReference type="SUPFAM" id="SSF50447">
    <property type="entry name" value="Translation proteins"/>
    <property type="match status" value="1"/>
</dbReference>
<protein>
    <recommendedName>
        <fullName evidence="1">Ribosome maturation factor RimM</fullName>
    </recommendedName>
</protein>
<feature type="chain" id="PRO_1000001176" description="Ribosome maturation factor RimM">
    <location>
        <begin position="1"/>
        <end position="169"/>
    </location>
</feature>
<feature type="domain" description="PRC barrel" evidence="1">
    <location>
        <begin position="97"/>
        <end position="169"/>
    </location>
</feature>
<keyword id="KW-0143">Chaperone</keyword>
<keyword id="KW-0963">Cytoplasm</keyword>
<keyword id="KW-0690">Ribosome biogenesis</keyword>
<keyword id="KW-0698">rRNA processing</keyword>
<gene>
    <name evidence="1" type="primary">rimM</name>
    <name type="ordered locus">FTW_0241</name>
</gene>
<reference key="1">
    <citation type="journal article" date="2007" name="PLoS ONE">
        <title>Complete genomic characterization of a pathogenic A.II strain of Francisella tularensis subspecies tularensis.</title>
        <authorList>
            <person name="Beckstrom-Sternberg S.M."/>
            <person name="Auerbach R.K."/>
            <person name="Godbole S."/>
            <person name="Pearson J.V."/>
            <person name="Beckstrom-Sternberg J.S."/>
            <person name="Deng Z."/>
            <person name="Munk C."/>
            <person name="Kubota K."/>
            <person name="Zhou Y."/>
            <person name="Bruce D."/>
            <person name="Noronha J."/>
            <person name="Scheuermann R.H."/>
            <person name="Wang A."/>
            <person name="Wei X."/>
            <person name="Wang J."/>
            <person name="Hao J."/>
            <person name="Wagner D.M."/>
            <person name="Brettin T.S."/>
            <person name="Brown N."/>
            <person name="Gilna P."/>
            <person name="Keim P.S."/>
        </authorList>
    </citation>
    <scope>NUCLEOTIDE SEQUENCE [LARGE SCALE GENOMIC DNA]</scope>
    <source>
        <strain>WY96-3418</strain>
    </source>
</reference>
<proteinExistence type="inferred from homology"/>
<sequence length="169" mass="19113">MSQDFVEIAKIGATYKLNGELNLYSLANSIETLLSYGDWYIQLPATNVWQQLKGESVLKRADKVYIKLANINNADTAKKYVNALIGVPKRALPQLAEDEVYFKDLIGCSVKNINNDSFGVVVDIIETGANEVLVCKEDNSEYLIPYVKQYIVSEDLNSKKIVVDWEYDY</sequence>
<comment type="function">
    <text evidence="1">An accessory protein needed during the final step in the assembly of 30S ribosomal subunit, possibly for assembly of the head region. Essential for efficient processing of 16S rRNA. May be needed both before and after RbfA during the maturation of 16S rRNA. It has affinity for free ribosomal 30S subunits but not for 70S ribosomes.</text>
</comment>
<comment type="subunit">
    <text evidence="1">Binds ribosomal protein uS19.</text>
</comment>
<comment type="subcellular location">
    <subcellularLocation>
        <location evidence="1">Cytoplasm</location>
    </subcellularLocation>
</comment>
<comment type="domain">
    <text evidence="1">The PRC barrel domain binds ribosomal protein uS19.</text>
</comment>
<comment type="similarity">
    <text evidence="1">Belongs to the RimM family.</text>
</comment>
<organism>
    <name type="scientific">Francisella tularensis subsp. tularensis (strain WY96-3418)</name>
    <dbReference type="NCBI Taxonomy" id="418136"/>
    <lineage>
        <taxon>Bacteria</taxon>
        <taxon>Pseudomonadati</taxon>
        <taxon>Pseudomonadota</taxon>
        <taxon>Gammaproteobacteria</taxon>
        <taxon>Thiotrichales</taxon>
        <taxon>Francisellaceae</taxon>
        <taxon>Francisella</taxon>
    </lineage>
</organism>
<name>RIMM_FRATW</name>
<accession>A4IWA6</accession>
<evidence type="ECO:0000255" key="1">
    <source>
        <dbReference type="HAMAP-Rule" id="MF_00014"/>
    </source>
</evidence>